<organism>
    <name type="scientific">Arabidopsis thaliana</name>
    <name type="common">Mouse-ear cress</name>
    <dbReference type="NCBI Taxonomy" id="3702"/>
    <lineage>
        <taxon>Eukaryota</taxon>
        <taxon>Viridiplantae</taxon>
        <taxon>Streptophyta</taxon>
        <taxon>Embryophyta</taxon>
        <taxon>Tracheophyta</taxon>
        <taxon>Spermatophyta</taxon>
        <taxon>Magnoliopsida</taxon>
        <taxon>eudicotyledons</taxon>
        <taxon>Gunneridae</taxon>
        <taxon>Pentapetalae</taxon>
        <taxon>rosids</taxon>
        <taxon>malvids</taxon>
        <taxon>Brassicales</taxon>
        <taxon>Brassicaceae</taxon>
        <taxon>Camelineae</taxon>
        <taxon>Arabidopsis</taxon>
    </lineage>
</organism>
<evidence type="ECO:0000255" key="1">
    <source>
        <dbReference type="PROSITE-ProRule" id="PRU00469"/>
    </source>
</evidence>
<evidence type="ECO:0000256" key="2">
    <source>
        <dbReference type="SAM" id="MobiDB-lite"/>
    </source>
</evidence>
<evidence type="ECO:0000269" key="3">
    <source>
    </source>
</evidence>
<evidence type="ECO:0000269" key="4">
    <source>
    </source>
</evidence>
<evidence type="ECO:0000303" key="5">
    <source>
    </source>
</evidence>
<evidence type="ECO:0000305" key="6"/>
<evidence type="ECO:0000305" key="7">
    <source>
    </source>
</evidence>
<evidence type="ECO:0000312" key="8">
    <source>
        <dbReference type="Araport" id="AT4G36650"/>
    </source>
</evidence>
<evidence type="ECO:0000312" key="9">
    <source>
        <dbReference type="EMBL" id="CAB16810.1"/>
    </source>
</evidence>
<accession>O23215</accession>
<name>PBRP1_ARATH</name>
<feature type="chain" id="PRO_0000436814" description="Plant-specific TFIIB-related protein 1">
    <location>
        <begin position="1"/>
        <end position="503"/>
    </location>
</feature>
<feature type="zinc finger region" description="TFIIB-type" evidence="1">
    <location>
        <begin position="1"/>
        <end position="33"/>
    </location>
</feature>
<feature type="region of interest" description="Disordered" evidence="2">
    <location>
        <begin position="328"/>
        <end position="366"/>
    </location>
</feature>
<feature type="region of interest" description="Disordered" evidence="2">
    <location>
        <begin position="411"/>
        <end position="431"/>
    </location>
</feature>
<feature type="region of interest" description="Disordered" evidence="2">
    <location>
        <begin position="436"/>
        <end position="455"/>
    </location>
</feature>
<feature type="region of interest" description="Disordered" evidence="2">
    <location>
        <begin position="468"/>
        <end position="503"/>
    </location>
</feature>
<feature type="compositionally biased region" description="Low complexity" evidence="2">
    <location>
        <begin position="333"/>
        <end position="346"/>
    </location>
</feature>
<feature type="compositionally biased region" description="Basic and acidic residues" evidence="2">
    <location>
        <begin position="355"/>
        <end position="366"/>
    </location>
</feature>
<proteinExistence type="evidence at transcript level"/>
<dbReference type="EMBL" id="AJ295068">
    <property type="protein sequence ID" value="CAC82714.1"/>
    <property type="molecule type" value="mRNA"/>
</dbReference>
<dbReference type="EMBL" id="AY463603">
    <property type="protein sequence ID" value="AAR28005.1"/>
    <property type="molecule type" value="mRNA"/>
</dbReference>
<dbReference type="EMBL" id="Z99708">
    <property type="protein sequence ID" value="CAB16810.1"/>
    <property type="molecule type" value="Genomic_DNA"/>
</dbReference>
<dbReference type="EMBL" id="AL161589">
    <property type="protein sequence ID" value="CAB80331.1"/>
    <property type="molecule type" value="Genomic_DNA"/>
</dbReference>
<dbReference type="EMBL" id="CP002687">
    <property type="protein sequence ID" value="AEE86682.1"/>
    <property type="molecule type" value="Genomic_DNA"/>
</dbReference>
<dbReference type="EMBL" id="BT006470">
    <property type="protein sequence ID" value="AAP21278.1"/>
    <property type="molecule type" value="mRNA"/>
</dbReference>
<dbReference type="PIR" id="G85432">
    <property type="entry name" value="G85432"/>
</dbReference>
<dbReference type="RefSeq" id="NP_195383.1">
    <molecule id="O23215-1"/>
    <property type="nucleotide sequence ID" value="NM_119828.6"/>
</dbReference>
<dbReference type="SMR" id="O23215"/>
<dbReference type="FunCoup" id="O23215">
    <property type="interactions" value="486"/>
</dbReference>
<dbReference type="STRING" id="3702.O23215"/>
<dbReference type="iPTMnet" id="O23215"/>
<dbReference type="PaxDb" id="3702-AT4G36650.1"/>
<dbReference type="ProteomicsDB" id="236842">
    <molecule id="O23215-1"/>
</dbReference>
<dbReference type="EnsemblPlants" id="AT4G36650.1">
    <molecule id="O23215-1"/>
    <property type="protein sequence ID" value="AT4G36650.1"/>
    <property type="gene ID" value="AT4G36650"/>
</dbReference>
<dbReference type="GeneID" id="829817"/>
<dbReference type="Gramene" id="AT4G36650.1">
    <molecule id="O23215-1"/>
    <property type="protein sequence ID" value="AT4G36650.1"/>
    <property type="gene ID" value="AT4G36650"/>
</dbReference>
<dbReference type="KEGG" id="ath:AT4G36650"/>
<dbReference type="Araport" id="AT4G36650"/>
<dbReference type="TAIR" id="AT4G36650">
    <property type="gene designation" value="PBRP"/>
</dbReference>
<dbReference type="eggNOG" id="KOG1597">
    <property type="taxonomic scope" value="Eukaryota"/>
</dbReference>
<dbReference type="HOGENOM" id="CLU_031240_1_0_1"/>
<dbReference type="InParanoid" id="O23215"/>
<dbReference type="OMA" id="TISWPFR"/>
<dbReference type="PhylomeDB" id="O23215"/>
<dbReference type="PRO" id="PR:O23215"/>
<dbReference type="Proteomes" id="UP000006548">
    <property type="component" value="Chromosome 4"/>
</dbReference>
<dbReference type="ExpressionAtlas" id="O23215">
    <property type="expression patterns" value="baseline and differential"/>
</dbReference>
<dbReference type="GO" id="GO:0009707">
    <property type="term" value="C:chloroplast outer membrane"/>
    <property type="evidence" value="ECO:0007669"/>
    <property type="project" value="UniProtKB-SubCell"/>
</dbReference>
<dbReference type="GO" id="GO:0005634">
    <property type="term" value="C:nucleus"/>
    <property type="evidence" value="ECO:0007669"/>
    <property type="project" value="UniProtKB-SubCell"/>
</dbReference>
<dbReference type="GO" id="GO:0009527">
    <property type="term" value="C:plastid outer membrane"/>
    <property type="evidence" value="ECO:0000314"/>
    <property type="project" value="TAIR"/>
</dbReference>
<dbReference type="GO" id="GO:0000182">
    <property type="term" value="F:rDNA binding"/>
    <property type="evidence" value="ECO:0000314"/>
    <property type="project" value="TAIR"/>
</dbReference>
<dbReference type="GO" id="GO:0017025">
    <property type="term" value="F:TBP-class protein binding"/>
    <property type="evidence" value="ECO:0007669"/>
    <property type="project" value="InterPro"/>
</dbReference>
<dbReference type="GO" id="GO:0008270">
    <property type="term" value="F:zinc ion binding"/>
    <property type="evidence" value="ECO:0007669"/>
    <property type="project" value="UniProtKB-KW"/>
</dbReference>
<dbReference type="GO" id="GO:0070897">
    <property type="term" value="P:transcription preinitiation complex assembly"/>
    <property type="evidence" value="ECO:0007669"/>
    <property type="project" value="InterPro"/>
</dbReference>
<dbReference type="CDD" id="cd20550">
    <property type="entry name" value="CYCLIN_TFIIB_archaea_like_rpt2"/>
    <property type="match status" value="1"/>
</dbReference>
<dbReference type="FunFam" id="1.10.472.10:FF:000045">
    <property type="entry name" value="Transcription initiation factor IIB"/>
    <property type="match status" value="1"/>
</dbReference>
<dbReference type="FunFam" id="1.10.472.10:FF:000050">
    <property type="entry name" value="Transcription initiation factor TFIIB"/>
    <property type="match status" value="1"/>
</dbReference>
<dbReference type="Gene3D" id="1.10.472.10">
    <property type="entry name" value="Cyclin-like"/>
    <property type="match status" value="2"/>
</dbReference>
<dbReference type="InterPro" id="IPR013763">
    <property type="entry name" value="Cyclin-like_dom"/>
</dbReference>
<dbReference type="InterPro" id="IPR036915">
    <property type="entry name" value="Cyclin-like_sf"/>
</dbReference>
<dbReference type="InterPro" id="IPR000812">
    <property type="entry name" value="TFIIB"/>
</dbReference>
<dbReference type="InterPro" id="IPR013150">
    <property type="entry name" value="TFIIB_cyclin"/>
</dbReference>
<dbReference type="PANTHER" id="PTHR11618:SF13">
    <property type="entry name" value="TRANSCRIPTION INITIATION FACTOR IIB"/>
    <property type="match status" value="1"/>
</dbReference>
<dbReference type="PANTHER" id="PTHR11618">
    <property type="entry name" value="TRANSCRIPTION INITIATION FACTOR IIB-RELATED"/>
    <property type="match status" value="1"/>
</dbReference>
<dbReference type="Pfam" id="PF00382">
    <property type="entry name" value="TFIIB"/>
    <property type="match status" value="2"/>
</dbReference>
<dbReference type="PRINTS" id="PR00685">
    <property type="entry name" value="TIFACTORIIB"/>
</dbReference>
<dbReference type="SMART" id="SM00385">
    <property type="entry name" value="CYCLIN"/>
    <property type="match status" value="2"/>
</dbReference>
<dbReference type="SUPFAM" id="SSF47954">
    <property type="entry name" value="Cyclin-like"/>
    <property type="match status" value="2"/>
</dbReference>
<gene>
    <name evidence="6" type="primary">PBRP1</name>
    <name evidence="5" type="synonym">PBRP</name>
    <name evidence="8" type="ordered locus">At4g36650</name>
    <name evidence="9" type="ORF">C7A10.710</name>
</gene>
<comment type="function">
    <text evidence="3 4">Plant-specific TFIIB-related protein that may be involved in an intracellular signaling pathway between plastids and the nucleus (PubMed:12697827). May act as general transcription factor (GTF) of RNA polymerase I-dependent transcription and rRNA synthesis. Forms a ternary complex with TBP2 and the rDNA promoter region (PubMed:18668124).</text>
</comment>
<comment type="subcellular location">
    <subcellularLocation>
        <location evidence="3">Plastid</location>
        <location evidence="3">Chloroplast outer membrane</location>
        <topology evidence="6">Peripheral membrane protein</topology>
        <orientation evidence="3">Cytoplasmic side</orientation>
    </subcellularLocation>
    <subcellularLocation>
        <location evidence="3">Nucleus</location>
    </subcellularLocation>
    <text evidence="3">Localizes to the nucleus under conditions of proteasome inhibition.</text>
</comment>
<comment type="alternative products">
    <event type="alternative splicing"/>
    <isoform>
        <id>O23215-1</id>
        <name>1</name>
        <sequence type="displayed"/>
    </isoform>
    <text evidence="6">A number of isoforms are produced. According to EST sequences.</text>
</comment>
<comment type="tissue specificity">
    <text evidence="3">Widely expressed.</text>
</comment>
<comment type="PTM">
    <text evidence="7">Ubiquinated. Subsequent degradation by the proteasome pathway.</text>
</comment>
<keyword id="KW-0025">Alternative splicing</keyword>
<keyword id="KW-0150">Chloroplast</keyword>
<keyword id="KW-0472">Membrane</keyword>
<keyword id="KW-0479">Metal-binding</keyword>
<keyword id="KW-0539">Nucleus</keyword>
<keyword id="KW-0934">Plastid</keyword>
<keyword id="KW-1002">Plastid outer membrane</keyword>
<keyword id="KW-1185">Reference proteome</keyword>
<keyword id="KW-0804">Transcription</keyword>
<keyword id="KW-0805">Transcription regulation</keyword>
<keyword id="KW-0862">Zinc</keyword>
<keyword id="KW-0863">Zinc-finger</keyword>
<protein>
    <recommendedName>
        <fullName evidence="6">Plant-specific TFIIB-related protein 1</fullName>
    </recommendedName>
    <alternativeName>
        <fullName evidence="5">Plant-specific TFIIB-related protein</fullName>
        <shortName evidence="5">AtPBRP</shortName>
    </alternativeName>
    <alternativeName>
        <fullName evidence="6">TFIIB-related protein PBRP1</fullName>
    </alternativeName>
</protein>
<sequence>MKCPYCSSAQGRCTTTSSGRSITECSSCGRVMEERQTQNHHLFHLRAQDTPLCLVTSDLQTAAQPSPEDEEDPFEPTGFITAFSTWSLEPSPIFARSSLSFSGHLAELERTLELASSTSNSNSSTVVVDNLRAYMQIIDVASILGLDCDISEHAFQLFRDCCSATCLRNRSVEALATACLVQAIREAQEPRTLQEISIAANVQQKEIGKYIKILGEALQLSQPINSNSISVHMPRFCTLLQLNKSAQELATHIGEVVINKCFCTRRNPISISAAAIYLACQLEDKRKTQAEICKITGLTEVTLRKVYKELLENWDDLLPSNYTPAVPPEKAFPTTTISTTRSTTPRAVDPPEPSFVEKDKPSAKPIETFDHTYQQPKGKEDKQPKFRQPWLFGTASVMNPAEMISEPAKPNAMDYEKQQLDKQQQQQLGDKETLPIYLRDHNPFPSNPSPSTGISTINWSFRPSVVPGSSSNLPVIHPPKLPPGYAEIRGSGSRNADNPHGDF</sequence>
<reference key="1">
    <citation type="journal article" date="2003" name="Mol. Cell. Biol.">
        <title>Transcription factor IIB (TFIIB)-related protein (pBrp), a plant-specific member of the TFIIB-related protein family.</title>
        <authorList>
            <person name="Lagrange T."/>
            <person name="Hakimi M.A."/>
            <person name="Pontier D."/>
            <person name="Courtois F."/>
            <person name="Alcaraz J.P."/>
            <person name="Grunwald D."/>
            <person name="Lam E."/>
            <person name="Lerbs-Mache S."/>
        </authorList>
    </citation>
    <scope>NUCLEOTIDE SEQUENCE [MRNA]</scope>
    <scope>FUNCTION</scope>
    <scope>SUBCELLULAR LOCATION</scope>
    <scope>TISSUE SPECIFICITY</scope>
    <source>
        <strain>cv. Columbia</strain>
    </source>
</reference>
<reference key="2">
    <citation type="submission" date="2003-11" db="EMBL/GenBank/DDBJ databases">
        <title>Binary protein-protein interactions of Arabidopsis thaliana general transcription factors TFIIa, TFIIb, TFIId, TFIIe, and TFIIf.</title>
        <authorList>
            <person name="Lawit S.J."/>
            <person name="Gurley W.B."/>
        </authorList>
    </citation>
    <scope>NUCLEOTIDE SEQUENCE [MRNA]</scope>
    <source>
        <strain>cv. Columbia</strain>
    </source>
</reference>
<reference key="3">
    <citation type="journal article" date="1998" name="Nature">
        <title>Analysis of 1.9 Mb of contiguous sequence from chromosome 4 of Arabidopsis thaliana.</title>
        <authorList>
            <person name="Bevan M."/>
            <person name="Bancroft I."/>
            <person name="Bent E."/>
            <person name="Love K."/>
            <person name="Goodman H.M."/>
            <person name="Dean C."/>
            <person name="Bergkamp R."/>
            <person name="Dirkse W."/>
            <person name="van Staveren M."/>
            <person name="Stiekema W."/>
            <person name="Drost L."/>
            <person name="Ridley P."/>
            <person name="Hudson S.-A."/>
            <person name="Patel K."/>
            <person name="Murphy G."/>
            <person name="Piffanelli P."/>
            <person name="Wedler H."/>
            <person name="Wedler E."/>
            <person name="Wambutt R."/>
            <person name="Weitzenegger T."/>
            <person name="Pohl T."/>
            <person name="Terryn N."/>
            <person name="Gielen J."/>
            <person name="Villarroel R."/>
            <person name="De Clercq R."/>
            <person name="van Montagu M."/>
            <person name="Lecharny A."/>
            <person name="Aubourg S."/>
            <person name="Gy I."/>
            <person name="Kreis M."/>
            <person name="Lao N."/>
            <person name="Kavanagh T."/>
            <person name="Hempel S."/>
            <person name="Kotter P."/>
            <person name="Entian K.-D."/>
            <person name="Rieger M."/>
            <person name="Schaefer M."/>
            <person name="Funk B."/>
            <person name="Mueller-Auer S."/>
            <person name="Silvey M."/>
            <person name="James R."/>
            <person name="Monfort A."/>
            <person name="Pons A."/>
            <person name="Puigdomenech P."/>
            <person name="Douka A."/>
            <person name="Voukelatou E."/>
            <person name="Milioni D."/>
            <person name="Hatzopoulos P."/>
            <person name="Piravandi E."/>
            <person name="Obermaier B."/>
            <person name="Hilbert H."/>
            <person name="Duesterhoeft A."/>
            <person name="Moores T."/>
            <person name="Jones J.D.G."/>
            <person name="Eneva T."/>
            <person name="Palme K."/>
            <person name="Benes V."/>
            <person name="Rechmann S."/>
            <person name="Ansorge W."/>
            <person name="Cooke R."/>
            <person name="Berger C."/>
            <person name="Delseny M."/>
            <person name="Voet M."/>
            <person name="Volckaert G."/>
            <person name="Mewes H.-W."/>
            <person name="Klosterman S."/>
            <person name="Schueller C."/>
            <person name="Chalwatzis N."/>
        </authorList>
    </citation>
    <scope>NUCLEOTIDE SEQUENCE [LARGE SCALE GENOMIC DNA]</scope>
    <source>
        <strain>cv. Columbia</strain>
    </source>
</reference>
<reference key="4">
    <citation type="journal article" date="1999" name="Nature">
        <title>Sequence and analysis of chromosome 4 of the plant Arabidopsis thaliana.</title>
        <authorList>
            <person name="Mayer K.F.X."/>
            <person name="Schueller C."/>
            <person name="Wambutt R."/>
            <person name="Murphy G."/>
            <person name="Volckaert G."/>
            <person name="Pohl T."/>
            <person name="Duesterhoeft A."/>
            <person name="Stiekema W."/>
            <person name="Entian K.-D."/>
            <person name="Terryn N."/>
            <person name="Harris B."/>
            <person name="Ansorge W."/>
            <person name="Brandt P."/>
            <person name="Grivell L.A."/>
            <person name="Rieger M."/>
            <person name="Weichselgartner M."/>
            <person name="de Simone V."/>
            <person name="Obermaier B."/>
            <person name="Mache R."/>
            <person name="Mueller M."/>
            <person name="Kreis M."/>
            <person name="Delseny M."/>
            <person name="Puigdomenech P."/>
            <person name="Watson M."/>
            <person name="Schmidtheini T."/>
            <person name="Reichert B."/>
            <person name="Portetelle D."/>
            <person name="Perez-Alonso M."/>
            <person name="Boutry M."/>
            <person name="Bancroft I."/>
            <person name="Vos P."/>
            <person name="Hoheisel J."/>
            <person name="Zimmermann W."/>
            <person name="Wedler H."/>
            <person name="Ridley P."/>
            <person name="Langham S.-A."/>
            <person name="McCullagh B."/>
            <person name="Bilham L."/>
            <person name="Robben J."/>
            <person name="van der Schueren J."/>
            <person name="Grymonprez B."/>
            <person name="Chuang Y.-J."/>
            <person name="Vandenbussche F."/>
            <person name="Braeken M."/>
            <person name="Weltjens I."/>
            <person name="Voet M."/>
            <person name="Bastiaens I."/>
            <person name="Aert R."/>
            <person name="Defoor E."/>
            <person name="Weitzenegger T."/>
            <person name="Bothe G."/>
            <person name="Ramsperger U."/>
            <person name="Hilbert H."/>
            <person name="Braun M."/>
            <person name="Holzer E."/>
            <person name="Brandt A."/>
            <person name="Peters S."/>
            <person name="van Staveren M."/>
            <person name="Dirkse W."/>
            <person name="Mooijman P."/>
            <person name="Klein Lankhorst R."/>
            <person name="Rose M."/>
            <person name="Hauf J."/>
            <person name="Koetter P."/>
            <person name="Berneiser S."/>
            <person name="Hempel S."/>
            <person name="Feldpausch M."/>
            <person name="Lamberth S."/>
            <person name="Van den Daele H."/>
            <person name="De Keyser A."/>
            <person name="Buysshaert C."/>
            <person name="Gielen J."/>
            <person name="Villarroel R."/>
            <person name="De Clercq R."/>
            <person name="van Montagu M."/>
            <person name="Rogers J."/>
            <person name="Cronin A."/>
            <person name="Quail M.A."/>
            <person name="Bray-Allen S."/>
            <person name="Clark L."/>
            <person name="Doggett J."/>
            <person name="Hall S."/>
            <person name="Kay M."/>
            <person name="Lennard N."/>
            <person name="McLay K."/>
            <person name="Mayes R."/>
            <person name="Pettett A."/>
            <person name="Rajandream M.A."/>
            <person name="Lyne M."/>
            <person name="Benes V."/>
            <person name="Rechmann S."/>
            <person name="Borkova D."/>
            <person name="Bloecker H."/>
            <person name="Scharfe M."/>
            <person name="Grimm M."/>
            <person name="Loehnert T.-H."/>
            <person name="Dose S."/>
            <person name="de Haan M."/>
            <person name="Maarse A.C."/>
            <person name="Schaefer M."/>
            <person name="Mueller-Auer S."/>
            <person name="Gabel C."/>
            <person name="Fuchs M."/>
            <person name="Fartmann B."/>
            <person name="Granderath K."/>
            <person name="Dauner D."/>
            <person name="Herzl A."/>
            <person name="Neumann S."/>
            <person name="Argiriou A."/>
            <person name="Vitale D."/>
            <person name="Liguori R."/>
            <person name="Piravandi E."/>
            <person name="Massenet O."/>
            <person name="Quigley F."/>
            <person name="Clabauld G."/>
            <person name="Muendlein A."/>
            <person name="Felber R."/>
            <person name="Schnabl S."/>
            <person name="Hiller R."/>
            <person name="Schmidt W."/>
            <person name="Lecharny A."/>
            <person name="Aubourg S."/>
            <person name="Chefdor F."/>
            <person name="Cooke R."/>
            <person name="Berger C."/>
            <person name="Monfort A."/>
            <person name="Casacuberta E."/>
            <person name="Gibbons T."/>
            <person name="Weber N."/>
            <person name="Vandenbol M."/>
            <person name="Bargues M."/>
            <person name="Terol J."/>
            <person name="Torres A."/>
            <person name="Perez-Perez A."/>
            <person name="Purnelle B."/>
            <person name="Bent E."/>
            <person name="Johnson S."/>
            <person name="Tacon D."/>
            <person name="Jesse T."/>
            <person name="Heijnen L."/>
            <person name="Schwarz S."/>
            <person name="Scholler P."/>
            <person name="Heber S."/>
            <person name="Francs P."/>
            <person name="Bielke C."/>
            <person name="Frishman D."/>
            <person name="Haase D."/>
            <person name="Lemcke K."/>
            <person name="Mewes H.-W."/>
            <person name="Stocker S."/>
            <person name="Zaccaria P."/>
            <person name="Bevan M."/>
            <person name="Wilson R.K."/>
            <person name="de la Bastide M."/>
            <person name="Habermann K."/>
            <person name="Parnell L."/>
            <person name="Dedhia N."/>
            <person name="Gnoj L."/>
            <person name="Schutz K."/>
            <person name="Huang E."/>
            <person name="Spiegel L."/>
            <person name="Sekhon M."/>
            <person name="Murray J."/>
            <person name="Sheet P."/>
            <person name="Cordes M."/>
            <person name="Abu-Threideh J."/>
            <person name="Stoneking T."/>
            <person name="Kalicki J."/>
            <person name="Graves T."/>
            <person name="Harmon G."/>
            <person name="Edwards J."/>
            <person name="Latreille P."/>
            <person name="Courtney L."/>
            <person name="Cloud J."/>
            <person name="Abbott A."/>
            <person name="Scott K."/>
            <person name="Johnson D."/>
            <person name="Minx P."/>
            <person name="Bentley D."/>
            <person name="Fulton B."/>
            <person name="Miller N."/>
            <person name="Greco T."/>
            <person name="Kemp K."/>
            <person name="Kramer J."/>
            <person name="Fulton L."/>
            <person name="Mardis E."/>
            <person name="Dante M."/>
            <person name="Pepin K."/>
            <person name="Hillier L.W."/>
            <person name="Nelson J."/>
            <person name="Spieth J."/>
            <person name="Ryan E."/>
            <person name="Andrews S."/>
            <person name="Geisel C."/>
            <person name="Layman D."/>
            <person name="Du H."/>
            <person name="Ali J."/>
            <person name="Berghoff A."/>
            <person name="Jones K."/>
            <person name="Drone K."/>
            <person name="Cotton M."/>
            <person name="Joshu C."/>
            <person name="Antonoiu B."/>
            <person name="Zidanic M."/>
            <person name="Strong C."/>
            <person name="Sun H."/>
            <person name="Lamar B."/>
            <person name="Yordan C."/>
            <person name="Ma P."/>
            <person name="Zhong J."/>
            <person name="Preston R."/>
            <person name="Vil D."/>
            <person name="Shekher M."/>
            <person name="Matero A."/>
            <person name="Shah R."/>
            <person name="Swaby I.K."/>
            <person name="O'Shaughnessy A."/>
            <person name="Rodriguez M."/>
            <person name="Hoffman J."/>
            <person name="Till S."/>
            <person name="Granat S."/>
            <person name="Shohdy N."/>
            <person name="Hasegawa A."/>
            <person name="Hameed A."/>
            <person name="Lodhi M."/>
            <person name="Johnson A."/>
            <person name="Chen E."/>
            <person name="Marra M.A."/>
            <person name="Martienssen R."/>
            <person name="McCombie W.R."/>
        </authorList>
    </citation>
    <scope>NUCLEOTIDE SEQUENCE [LARGE SCALE GENOMIC DNA]</scope>
    <source>
        <strain>cv. Columbia</strain>
    </source>
</reference>
<reference key="5">
    <citation type="journal article" date="2017" name="Plant J.">
        <title>Araport11: a complete reannotation of the Arabidopsis thaliana reference genome.</title>
        <authorList>
            <person name="Cheng C.Y."/>
            <person name="Krishnakumar V."/>
            <person name="Chan A.P."/>
            <person name="Thibaud-Nissen F."/>
            <person name="Schobel S."/>
            <person name="Town C.D."/>
        </authorList>
    </citation>
    <scope>GENOME REANNOTATION</scope>
    <source>
        <strain>cv. Columbia</strain>
    </source>
</reference>
<reference key="6">
    <citation type="journal article" date="2003" name="Science">
        <title>Empirical analysis of transcriptional activity in the Arabidopsis genome.</title>
        <authorList>
            <person name="Yamada K."/>
            <person name="Lim J."/>
            <person name="Dale J.M."/>
            <person name="Chen H."/>
            <person name="Shinn P."/>
            <person name="Palm C.J."/>
            <person name="Southwick A.M."/>
            <person name="Wu H.C."/>
            <person name="Kim C.J."/>
            <person name="Nguyen M."/>
            <person name="Pham P.K."/>
            <person name="Cheuk R.F."/>
            <person name="Karlin-Newmann G."/>
            <person name="Liu S.X."/>
            <person name="Lam B."/>
            <person name="Sakano H."/>
            <person name="Wu T."/>
            <person name="Yu G."/>
            <person name="Miranda M."/>
            <person name="Quach H.L."/>
            <person name="Tripp M."/>
            <person name="Chang C.H."/>
            <person name="Lee J.M."/>
            <person name="Toriumi M.J."/>
            <person name="Chan M.M."/>
            <person name="Tang C.C."/>
            <person name="Onodera C.S."/>
            <person name="Deng J.M."/>
            <person name="Akiyama K."/>
            <person name="Ansari Y."/>
            <person name="Arakawa T."/>
            <person name="Banh J."/>
            <person name="Banno F."/>
            <person name="Bowser L."/>
            <person name="Brooks S.Y."/>
            <person name="Carninci P."/>
            <person name="Chao Q."/>
            <person name="Choy N."/>
            <person name="Enju A."/>
            <person name="Goldsmith A.D."/>
            <person name="Gurjal M."/>
            <person name="Hansen N.F."/>
            <person name="Hayashizaki Y."/>
            <person name="Johnson-Hopson C."/>
            <person name="Hsuan V.W."/>
            <person name="Iida K."/>
            <person name="Karnes M."/>
            <person name="Khan S."/>
            <person name="Koesema E."/>
            <person name="Ishida J."/>
            <person name="Jiang P.X."/>
            <person name="Jones T."/>
            <person name="Kawai J."/>
            <person name="Kamiya A."/>
            <person name="Meyers C."/>
            <person name="Nakajima M."/>
            <person name="Narusaka M."/>
            <person name="Seki M."/>
            <person name="Sakurai T."/>
            <person name="Satou M."/>
            <person name="Tamse R."/>
            <person name="Vaysberg M."/>
            <person name="Wallender E.K."/>
            <person name="Wong C."/>
            <person name="Yamamura Y."/>
            <person name="Yuan S."/>
            <person name="Shinozaki K."/>
            <person name="Davis R.W."/>
            <person name="Theologis A."/>
            <person name="Ecker J.R."/>
        </authorList>
    </citation>
    <scope>NUCLEOTIDE SEQUENCE [LARGE SCALE MRNA]</scope>
    <source>
        <strain>cv. Columbia</strain>
    </source>
</reference>
<reference key="7">
    <citation type="journal article" date="2008" name="EMBO J.">
        <title>The plant-specific TFIIB-related protein, pBrp, is a general transcription factor for RNA polymerase I.</title>
        <authorList>
            <person name="Imamura S."/>
            <person name="Hanaoka M."/>
            <person name="Tanaka K."/>
        </authorList>
    </citation>
    <scope>FUNCTION</scope>
</reference>